<evidence type="ECO:0000255" key="1">
    <source>
        <dbReference type="HAMAP-Rule" id="MF_00111"/>
    </source>
</evidence>
<comment type="function">
    <text evidence="1">Cell wall formation. Adds enolpyruvyl to UDP-N-acetylglucosamine.</text>
</comment>
<comment type="catalytic activity">
    <reaction evidence="1">
        <text>phosphoenolpyruvate + UDP-N-acetyl-alpha-D-glucosamine = UDP-N-acetyl-3-O-(1-carboxyvinyl)-alpha-D-glucosamine + phosphate</text>
        <dbReference type="Rhea" id="RHEA:18681"/>
        <dbReference type="ChEBI" id="CHEBI:43474"/>
        <dbReference type="ChEBI" id="CHEBI:57705"/>
        <dbReference type="ChEBI" id="CHEBI:58702"/>
        <dbReference type="ChEBI" id="CHEBI:68483"/>
        <dbReference type="EC" id="2.5.1.7"/>
    </reaction>
</comment>
<comment type="pathway">
    <text evidence="1">Cell wall biogenesis; peptidoglycan biosynthesis.</text>
</comment>
<comment type="subcellular location">
    <subcellularLocation>
        <location evidence="1">Cytoplasm</location>
    </subcellularLocation>
</comment>
<comment type="similarity">
    <text evidence="1">Belongs to the EPSP synthase family. MurA subfamily.</text>
</comment>
<name>MURA_ACICJ</name>
<sequence>MDRIRIRGGRPLEGVIDISGAKNSALKVMVAGLLTDERLELENVPALADVATMAQLLAQHGIAVEETGAKQLSVGGAITNTEAPYDIVRKMRASILVLGPLLARTGEARVSLPGGCAIGTRPVDLHLKGLEAMGAEIALDGGYINARAPKGLHGATITFPFVSVGATEQLLLTATLAEGETVLVNAAREPEIGDLADCLNKMGADISGIGSDRLTIRGVKALHGARHTILPDRIEAGTYACAAAITGGGVLLRGARMFDLGALASTLGEAGVDVTEVAEGVTVSRRNGLHGTDAMTEPFPGFVTDMQAQFMTLMAVAEGASMITETIFENRFMHVPELNRMGARINVHGSSAIVRGVPGLSGAPVMATDLRASFSLVLAGLAAKGETIVNRVYHLDRGYEAVERKLAACGADIERLRD</sequence>
<dbReference type="EC" id="2.5.1.7" evidence="1"/>
<dbReference type="EMBL" id="CP000697">
    <property type="protein sequence ID" value="ABQ30716.1"/>
    <property type="molecule type" value="Genomic_DNA"/>
</dbReference>
<dbReference type="RefSeq" id="WP_007422449.1">
    <property type="nucleotide sequence ID" value="NC_009484.1"/>
</dbReference>
<dbReference type="SMR" id="A5FYN4"/>
<dbReference type="STRING" id="349163.Acry_1508"/>
<dbReference type="KEGG" id="acr:Acry_1508"/>
<dbReference type="eggNOG" id="COG0766">
    <property type="taxonomic scope" value="Bacteria"/>
</dbReference>
<dbReference type="HOGENOM" id="CLU_027387_0_0_5"/>
<dbReference type="UniPathway" id="UPA00219"/>
<dbReference type="Proteomes" id="UP000000245">
    <property type="component" value="Chromosome"/>
</dbReference>
<dbReference type="GO" id="GO:0005737">
    <property type="term" value="C:cytoplasm"/>
    <property type="evidence" value="ECO:0007669"/>
    <property type="project" value="UniProtKB-SubCell"/>
</dbReference>
<dbReference type="GO" id="GO:0008760">
    <property type="term" value="F:UDP-N-acetylglucosamine 1-carboxyvinyltransferase activity"/>
    <property type="evidence" value="ECO:0007669"/>
    <property type="project" value="UniProtKB-UniRule"/>
</dbReference>
<dbReference type="GO" id="GO:0051301">
    <property type="term" value="P:cell division"/>
    <property type="evidence" value="ECO:0007669"/>
    <property type="project" value="UniProtKB-KW"/>
</dbReference>
<dbReference type="GO" id="GO:0071555">
    <property type="term" value="P:cell wall organization"/>
    <property type="evidence" value="ECO:0007669"/>
    <property type="project" value="UniProtKB-KW"/>
</dbReference>
<dbReference type="GO" id="GO:0009252">
    <property type="term" value="P:peptidoglycan biosynthetic process"/>
    <property type="evidence" value="ECO:0007669"/>
    <property type="project" value="UniProtKB-UniRule"/>
</dbReference>
<dbReference type="GO" id="GO:0008360">
    <property type="term" value="P:regulation of cell shape"/>
    <property type="evidence" value="ECO:0007669"/>
    <property type="project" value="UniProtKB-KW"/>
</dbReference>
<dbReference type="GO" id="GO:0019277">
    <property type="term" value="P:UDP-N-acetylgalactosamine biosynthetic process"/>
    <property type="evidence" value="ECO:0007669"/>
    <property type="project" value="InterPro"/>
</dbReference>
<dbReference type="CDD" id="cd01555">
    <property type="entry name" value="UdpNAET"/>
    <property type="match status" value="1"/>
</dbReference>
<dbReference type="FunFam" id="3.65.10.10:FF:000001">
    <property type="entry name" value="UDP-N-acetylglucosamine 1-carboxyvinyltransferase"/>
    <property type="match status" value="1"/>
</dbReference>
<dbReference type="Gene3D" id="3.65.10.10">
    <property type="entry name" value="Enolpyruvate transferase domain"/>
    <property type="match status" value="2"/>
</dbReference>
<dbReference type="HAMAP" id="MF_00111">
    <property type="entry name" value="MurA"/>
    <property type="match status" value="1"/>
</dbReference>
<dbReference type="InterPro" id="IPR001986">
    <property type="entry name" value="Enolpyruvate_Tfrase_dom"/>
</dbReference>
<dbReference type="InterPro" id="IPR036968">
    <property type="entry name" value="Enolpyruvate_Tfrase_sf"/>
</dbReference>
<dbReference type="InterPro" id="IPR050068">
    <property type="entry name" value="MurA_subfamily"/>
</dbReference>
<dbReference type="InterPro" id="IPR013792">
    <property type="entry name" value="RNA3'P_cycl/enolpyr_Trfase_a/b"/>
</dbReference>
<dbReference type="InterPro" id="IPR005750">
    <property type="entry name" value="UDP_GlcNAc_COvinyl_MurA"/>
</dbReference>
<dbReference type="NCBIfam" id="TIGR01072">
    <property type="entry name" value="murA"/>
    <property type="match status" value="1"/>
</dbReference>
<dbReference type="NCBIfam" id="NF006873">
    <property type="entry name" value="PRK09369.1"/>
    <property type="match status" value="1"/>
</dbReference>
<dbReference type="PANTHER" id="PTHR43783">
    <property type="entry name" value="UDP-N-ACETYLGLUCOSAMINE 1-CARBOXYVINYLTRANSFERASE"/>
    <property type="match status" value="1"/>
</dbReference>
<dbReference type="PANTHER" id="PTHR43783:SF1">
    <property type="entry name" value="UDP-N-ACETYLGLUCOSAMINE 1-CARBOXYVINYLTRANSFERASE"/>
    <property type="match status" value="1"/>
</dbReference>
<dbReference type="Pfam" id="PF00275">
    <property type="entry name" value="EPSP_synthase"/>
    <property type="match status" value="1"/>
</dbReference>
<dbReference type="SUPFAM" id="SSF55205">
    <property type="entry name" value="EPT/RTPC-like"/>
    <property type="match status" value="1"/>
</dbReference>
<feature type="chain" id="PRO_1000023012" description="UDP-N-acetylglucosamine 1-carboxyvinyltransferase">
    <location>
        <begin position="1"/>
        <end position="418"/>
    </location>
</feature>
<feature type="active site" description="Proton donor" evidence="1">
    <location>
        <position position="116"/>
    </location>
</feature>
<feature type="binding site" evidence="1">
    <location>
        <begin position="22"/>
        <end position="23"/>
    </location>
    <ligand>
        <name>phosphoenolpyruvate</name>
        <dbReference type="ChEBI" id="CHEBI:58702"/>
    </ligand>
</feature>
<feature type="binding site" evidence="1">
    <location>
        <position position="92"/>
    </location>
    <ligand>
        <name>UDP-N-acetyl-alpha-D-glucosamine</name>
        <dbReference type="ChEBI" id="CHEBI:57705"/>
    </ligand>
</feature>
<feature type="binding site" evidence="1">
    <location>
        <begin position="121"/>
        <end position="125"/>
    </location>
    <ligand>
        <name>UDP-N-acetyl-alpha-D-glucosamine</name>
        <dbReference type="ChEBI" id="CHEBI:57705"/>
    </ligand>
</feature>
<feature type="binding site" evidence="1">
    <location>
        <position position="305"/>
    </location>
    <ligand>
        <name>UDP-N-acetyl-alpha-D-glucosamine</name>
        <dbReference type="ChEBI" id="CHEBI:57705"/>
    </ligand>
</feature>
<feature type="binding site" evidence="1">
    <location>
        <position position="327"/>
    </location>
    <ligand>
        <name>UDP-N-acetyl-alpha-D-glucosamine</name>
        <dbReference type="ChEBI" id="CHEBI:57705"/>
    </ligand>
</feature>
<feature type="modified residue" description="2-(S-cysteinyl)pyruvic acid O-phosphothioketal" evidence="1">
    <location>
        <position position="116"/>
    </location>
</feature>
<reference key="1">
    <citation type="submission" date="2007-05" db="EMBL/GenBank/DDBJ databases">
        <title>Complete sequence of chromosome of Acidiphilium cryptum JF-5.</title>
        <authorList>
            <consortium name="US DOE Joint Genome Institute"/>
            <person name="Copeland A."/>
            <person name="Lucas S."/>
            <person name="Lapidus A."/>
            <person name="Barry K."/>
            <person name="Detter J.C."/>
            <person name="Glavina del Rio T."/>
            <person name="Hammon N."/>
            <person name="Israni S."/>
            <person name="Dalin E."/>
            <person name="Tice H."/>
            <person name="Pitluck S."/>
            <person name="Sims D."/>
            <person name="Brettin T."/>
            <person name="Bruce D."/>
            <person name="Han C."/>
            <person name="Schmutz J."/>
            <person name="Larimer F."/>
            <person name="Land M."/>
            <person name="Hauser L."/>
            <person name="Kyrpides N."/>
            <person name="Kim E."/>
            <person name="Magnuson T."/>
            <person name="Richardson P."/>
        </authorList>
    </citation>
    <scope>NUCLEOTIDE SEQUENCE [LARGE SCALE GENOMIC DNA]</scope>
    <source>
        <strain>JF-5</strain>
    </source>
</reference>
<organism>
    <name type="scientific">Acidiphilium cryptum (strain JF-5)</name>
    <dbReference type="NCBI Taxonomy" id="349163"/>
    <lineage>
        <taxon>Bacteria</taxon>
        <taxon>Pseudomonadati</taxon>
        <taxon>Pseudomonadota</taxon>
        <taxon>Alphaproteobacteria</taxon>
        <taxon>Acetobacterales</taxon>
        <taxon>Acidocellaceae</taxon>
        <taxon>Acidiphilium</taxon>
    </lineage>
</organism>
<protein>
    <recommendedName>
        <fullName evidence="1">UDP-N-acetylglucosamine 1-carboxyvinyltransferase</fullName>
        <ecNumber evidence="1">2.5.1.7</ecNumber>
    </recommendedName>
    <alternativeName>
        <fullName evidence="1">Enoylpyruvate transferase</fullName>
    </alternativeName>
    <alternativeName>
        <fullName evidence="1">UDP-N-acetylglucosamine enolpyruvyl transferase</fullName>
        <shortName evidence="1">EPT</shortName>
    </alternativeName>
</protein>
<keyword id="KW-0131">Cell cycle</keyword>
<keyword id="KW-0132">Cell division</keyword>
<keyword id="KW-0133">Cell shape</keyword>
<keyword id="KW-0961">Cell wall biogenesis/degradation</keyword>
<keyword id="KW-0963">Cytoplasm</keyword>
<keyword id="KW-0573">Peptidoglycan synthesis</keyword>
<keyword id="KW-0670">Pyruvate</keyword>
<keyword id="KW-1185">Reference proteome</keyword>
<keyword id="KW-0808">Transferase</keyword>
<proteinExistence type="inferred from homology"/>
<accession>A5FYN4</accession>
<gene>
    <name evidence="1" type="primary">murA</name>
    <name type="ordered locus">Acry_1508</name>
</gene>